<dbReference type="EMBL" id="CP000942">
    <property type="protein sequence ID" value="ACA33115.1"/>
    <property type="molecule type" value="Genomic_DNA"/>
</dbReference>
<dbReference type="RefSeq" id="WP_006689129.1">
    <property type="nucleotide sequence ID" value="NC_010503.1"/>
</dbReference>
<dbReference type="SMR" id="B1AIM2"/>
<dbReference type="GeneID" id="29672689"/>
<dbReference type="KEGG" id="upa:UPA3_0241"/>
<dbReference type="HOGENOM" id="CLU_037562_2_0_14"/>
<dbReference type="Proteomes" id="UP000002162">
    <property type="component" value="Chromosome"/>
</dbReference>
<dbReference type="GO" id="GO:1990904">
    <property type="term" value="C:ribonucleoprotein complex"/>
    <property type="evidence" value="ECO:0007669"/>
    <property type="project" value="UniProtKB-KW"/>
</dbReference>
<dbReference type="GO" id="GO:0005840">
    <property type="term" value="C:ribosome"/>
    <property type="evidence" value="ECO:0007669"/>
    <property type="project" value="UniProtKB-KW"/>
</dbReference>
<dbReference type="GO" id="GO:0019843">
    <property type="term" value="F:rRNA binding"/>
    <property type="evidence" value="ECO:0007669"/>
    <property type="project" value="UniProtKB-UniRule"/>
</dbReference>
<dbReference type="GO" id="GO:0003735">
    <property type="term" value="F:structural constituent of ribosome"/>
    <property type="evidence" value="ECO:0007669"/>
    <property type="project" value="InterPro"/>
</dbReference>
<dbReference type="GO" id="GO:0006412">
    <property type="term" value="P:translation"/>
    <property type="evidence" value="ECO:0007669"/>
    <property type="project" value="UniProtKB-UniRule"/>
</dbReference>
<dbReference type="Gene3D" id="3.30.70.330">
    <property type="match status" value="1"/>
</dbReference>
<dbReference type="HAMAP" id="MF_01369_B">
    <property type="entry name" value="Ribosomal_uL23_B"/>
    <property type="match status" value="1"/>
</dbReference>
<dbReference type="InterPro" id="IPR012677">
    <property type="entry name" value="Nucleotide-bd_a/b_plait_sf"/>
</dbReference>
<dbReference type="InterPro" id="IPR013025">
    <property type="entry name" value="Ribosomal_uL23-like"/>
</dbReference>
<dbReference type="InterPro" id="IPR012678">
    <property type="entry name" value="Ribosomal_uL23/eL15/eS24_sf"/>
</dbReference>
<dbReference type="NCBIfam" id="NF004367">
    <property type="entry name" value="PRK05738.3-3"/>
    <property type="match status" value="1"/>
</dbReference>
<dbReference type="Pfam" id="PF00276">
    <property type="entry name" value="Ribosomal_L23"/>
    <property type="match status" value="1"/>
</dbReference>
<dbReference type="SUPFAM" id="SSF54189">
    <property type="entry name" value="Ribosomal proteins S24e, L23 and L15e"/>
    <property type="match status" value="1"/>
</dbReference>
<gene>
    <name evidence="1" type="primary">rplW</name>
    <name type="ordered locus">UPA3_0241</name>
</gene>
<sequence length="105" mass="11950">MELTRVILHPYTTEKTYSIRNKSEHETLTFIVDKNANKYQIREAFIAIFGLKPLKIRTTNRRPAKIRTSTARPGYTKAKKIAYVVMPVGVKVAVSKEEVEAANAK</sequence>
<proteinExistence type="inferred from homology"/>
<name>RL23_UREP2</name>
<accession>B1AIM2</accession>
<keyword id="KW-0687">Ribonucleoprotein</keyword>
<keyword id="KW-0689">Ribosomal protein</keyword>
<keyword id="KW-0694">RNA-binding</keyword>
<keyword id="KW-0699">rRNA-binding</keyword>
<feature type="chain" id="PRO_1000144620" description="Large ribosomal subunit protein uL23">
    <location>
        <begin position="1"/>
        <end position="105"/>
    </location>
</feature>
<evidence type="ECO:0000255" key="1">
    <source>
        <dbReference type="HAMAP-Rule" id="MF_01369"/>
    </source>
</evidence>
<evidence type="ECO:0000305" key="2"/>
<protein>
    <recommendedName>
        <fullName evidence="1">Large ribosomal subunit protein uL23</fullName>
    </recommendedName>
    <alternativeName>
        <fullName evidence="2">50S ribosomal protein L23</fullName>
    </alternativeName>
</protein>
<reference key="1">
    <citation type="submission" date="2008-02" db="EMBL/GenBank/DDBJ databases">
        <title>Genome sequence of Ureaplasma parvum serovar 3.</title>
        <authorList>
            <person name="Methe B.A."/>
            <person name="Glass J."/>
            <person name="Waites K."/>
            <person name="Shrivastava S."/>
        </authorList>
    </citation>
    <scope>NUCLEOTIDE SEQUENCE [LARGE SCALE GENOMIC DNA]</scope>
    <source>
        <strain>ATCC 27815 / 27 / NCTC 11736</strain>
    </source>
</reference>
<comment type="function">
    <text evidence="1">One of the early assembly proteins it binds 23S rRNA. One of the proteins that surrounds the polypeptide exit tunnel on the outside of the ribosome. Forms the main docking site for trigger factor binding to the ribosome.</text>
</comment>
<comment type="subunit">
    <text evidence="1">Part of the 50S ribosomal subunit. Contacts protein L29, and trigger factor when it is bound to the ribosome.</text>
</comment>
<comment type="similarity">
    <text evidence="1">Belongs to the universal ribosomal protein uL23 family.</text>
</comment>
<organism>
    <name type="scientific">Ureaplasma parvum serovar 3 (strain ATCC 27815 / 27 / NCTC 11736)</name>
    <dbReference type="NCBI Taxonomy" id="505682"/>
    <lineage>
        <taxon>Bacteria</taxon>
        <taxon>Bacillati</taxon>
        <taxon>Mycoplasmatota</taxon>
        <taxon>Mycoplasmoidales</taxon>
        <taxon>Mycoplasmoidaceae</taxon>
        <taxon>Ureaplasma</taxon>
    </lineage>
</organism>